<reference key="1">
    <citation type="journal article" date="2001" name="Plant J.">
        <title>Two glucosyltransferases are involved in detoxification of benzoxazinoids in maize.</title>
        <authorList>
            <person name="von Rad U."/>
            <person name="Huttl R."/>
            <person name="Lottspeich F."/>
            <person name="Gierl A."/>
            <person name="Frey M."/>
        </authorList>
    </citation>
    <scope>NUCLEOTIDE SEQUENCE [GENOMIC DNA]</scope>
    <scope>PARTIAL PROTEIN SEQUENCE</scope>
    <scope>FUNCTION</scope>
    <scope>CATALYTIC ACTIVITY</scope>
    <scope>BIOPHYSICOCHEMICAL PROPERTIES</scope>
    <scope>DEVELOPMENTAL STAGE</scope>
    <scope>TISSUE SPECIFICITY</scope>
    <source>
        <strain>cv. B73</strain>
    </source>
</reference>
<reference key="2">
    <citation type="journal article" date="1989" name="Plant Physiol.">
        <title>Hydroxamic acid glucosyltransferases from maize seedlings.</title>
        <authorList>
            <person name="Bailey B.A."/>
            <person name="Larson R.L."/>
        </authorList>
    </citation>
    <scope>CATALYTIC ACTIVITY</scope>
    <scope>BIOPHYSICOCHEMICAL PROPERTIES</scope>
    <scope>COFACTOR</scope>
    <source>
        <strain>cv. CI31A</strain>
    </source>
</reference>
<feature type="chain" id="PRO_0000415306" description="DIMBOA UDP-glucosyltransferase BX8">
    <location>
        <begin position="1"/>
        <end position="459"/>
    </location>
</feature>
<feature type="active site" description="Proton acceptor" evidence="1">
    <location>
        <position position="19"/>
    </location>
</feature>
<feature type="active site" description="Charge relay" evidence="1">
    <location>
        <position position="119"/>
    </location>
</feature>
<feature type="binding site" evidence="2">
    <location>
        <position position="19"/>
    </location>
    <ligand>
        <name>an anthocyanidin</name>
        <dbReference type="ChEBI" id="CHEBI:143576"/>
    </ligand>
</feature>
<feature type="binding site" evidence="1">
    <location>
        <position position="141"/>
    </location>
    <ligand>
        <name>UDP-alpha-D-glucose</name>
        <dbReference type="ChEBI" id="CHEBI:58885"/>
    </ligand>
</feature>
<feature type="binding site" evidence="1">
    <location>
        <position position="340"/>
    </location>
    <ligand>
        <name>UDP-alpha-D-glucose</name>
        <dbReference type="ChEBI" id="CHEBI:58885"/>
    </ligand>
</feature>
<feature type="binding site" evidence="1">
    <location>
        <position position="342"/>
    </location>
    <ligand>
        <name>UDP-alpha-D-glucose</name>
        <dbReference type="ChEBI" id="CHEBI:58885"/>
    </ligand>
</feature>
<feature type="binding site" evidence="1">
    <location>
        <position position="357"/>
    </location>
    <ligand>
        <name>UDP-alpha-D-glucose</name>
        <dbReference type="ChEBI" id="CHEBI:58885"/>
    </ligand>
</feature>
<feature type="binding site" evidence="1">
    <location>
        <position position="360"/>
    </location>
    <ligand>
        <name>UDP-alpha-D-glucose</name>
        <dbReference type="ChEBI" id="CHEBI:58885"/>
    </ligand>
</feature>
<feature type="binding site" evidence="1">
    <location>
        <position position="361"/>
    </location>
    <ligand>
        <name>UDP-alpha-D-glucose</name>
        <dbReference type="ChEBI" id="CHEBI:58885"/>
    </ligand>
</feature>
<feature type="binding site" evidence="1">
    <location>
        <position position="362"/>
    </location>
    <ligand>
        <name>UDP-alpha-D-glucose</name>
        <dbReference type="ChEBI" id="CHEBI:58885"/>
    </ligand>
</feature>
<feature type="binding site" evidence="1">
    <location>
        <position position="365"/>
    </location>
    <ligand>
        <name>UDP-alpha-D-glucose</name>
        <dbReference type="ChEBI" id="CHEBI:58885"/>
    </ligand>
</feature>
<feature type="binding site" evidence="2">
    <location>
        <position position="380"/>
    </location>
    <ligand>
        <name>an anthocyanidin</name>
        <dbReference type="ChEBI" id="CHEBI:143576"/>
    </ligand>
</feature>
<feature type="binding site" evidence="1">
    <location>
        <position position="381"/>
    </location>
    <ligand>
        <name>UDP-alpha-D-glucose</name>
        <dbReference type="ChEBI" id="CHEBI:58885"/>
    </ligand>
</feature>
<feature type="binding site" evidence="1">
    <location>
        <position position="382"/>
    </location>
    <ligand>
        <name>UDP-alpha-D-glucose</name>
        <dbReference type="ChEBI" id="CHEBI:58885"/>
    </ligand>
</feature>
<dbReference type="EC" id="2.4.1.202" evidence="3 4"/>
<dbReference type="EMBL" id="AF331854">
    <property type="protein sequence ID" value="AAL57037.1"/>
    <property type="molecule type" value="Genomic_DNA"/>
</dbReference>
<dbReference type="SMR" id="Q8W2B7"/>
<dbReference type="FunCoup" id="Q8W2B7">
    <property type="interactions" value="68"/>
</dbReference>
<dbReference type="STRING" id="4577.Q8W2B7"/>
<dbReference type="CAZy" id="GT1">
    <property type="family name" value="Glycosyltransferase Family 1"/>
</dbReference>
<dbReference type="PaxDb" id="4577-GRMZM2G085054_P01"/>
<dbReference type="MaizeGDB" id="9021865"/>
<dbReference type="eggNOG" id="KOG1192">
    <property type="taxonomic scope" value="Eukaryota"/>
</dbReference>
<dbReference type="InParanoid" id="Q8W2B7"/>
<dbReference type="BioCyc" id="MetaCyc:MONOMER-10602"/>
<dbReference type="SABIO-RK" id="Q8W2B7"/>
<dbReference type="Proteomes" id="UP000007305">
    <property type="component" value="Unplaced"/>
</dbReference>
<dbReference type="ExpressionAtlas" id="Q8W2B7">
    <property type="expression patterns" value="baseline and differential"/>
</dbReference>
<dbReference type="GO" id="GO:0005737">
    <property type="term" value="C:cytoplasm"/>
    <property type="evidence" value="ECO:0000318"/>
    <property type="project" value="GO_Central"/>
</dbReference>
<dbReference type="GO" id="GO:0047254">
    <property type="term" value="F:2,4-dihydroxy-7-methoxy-2H-1,4-benzoxazin-3(4H)-one 2-D-glucosyltransferase activity"/>
    <property type="evidence" value="ECO:0000314"/>
    <property type="project" value="UniProtKB"/>
</dbReference>
<dbReference type="GO" id="GO:0080043">
    <property type="term" value="F:quercetin 3-O-glucosyltransferase activity"/>
    <property type="evidence" value="ECO:0000318"/>
    <property type="project" value="GO_Central"/>
</dbReference>
<dbReference type="GO" id="GO:0080044">
    <property type="term" value="F:quercetin 7-O-glucosyltransferase activity"/>
    <property type="evidence" value="ECO:0000318"/>
    <property type="project" value="GO_Central"/>
</dbReference>
<dbReference type="CDD" id="cd03784">
    <property type="entry name" value="GT1_Gtf-like"/>
    <property type="match status" value="1"/>
</dbReference>
<dbReference type="FunFam" id="3.40.50.2000:FF:000040">
    <property type="entry name" value="UDP-glycosyltransferase 76C1"/>
    <property type="match status" value="1"/>
</dbReference>
<dbReference type="FunFam" id="3.40.50.2000:FF:000120">
    <property type="entry name" value="UDP-glycosyltransferase 76C1"/>
    <property type="match status" value="1"/>
</dbReference>
<dbReference type="Gene3D" id="3.40.50.2000">
    <property type="entry name" value="Glycogen Phosphorylase B"/>
    <property type="match status" value="2"/>
</dbReference>
<dbReference type="InterPro" id="IPR002213">
    <property type="entry name" value="UDP_glucos_trans"/>
</dbReference>
<dbReference type="InterPro" id="IPR035595">
    <property type="entry name" value="UDP_glycos_trans_CS"/>
</dbReference>
<dbReference type="PANTHER" id="PTHR11926">
    <property type="entry name" value="GLUCOSYL/GLUCURONOSYL TRANSFERASES"/>
    <property type="match status" value="1"/>
</dbReference>
<dbReference type="PANTHER" id="PTHR11926:SF1374">
    <property type="entry name" value="UDP-GLYCOSYLTRANSFERASE 76F1-RELATED"/>
    <property type="match status" value="1"/>
</dbReference>
<dbReference type="Pfam" id="PF00201">
    <property type="entry name" value="UDPGT"/>
    <property type="match status" value="1"/>
</dbReference>
<dbReference type="SUPFAM" id="SSF53756">
    <property type="entry name" value="UDP-Glycosyltransferase/glycogen phosphorylase"/>
    <property type="match status" value="1"/>
</dbReference>
<dbReference type="PROSITE" id="PS00375">
    <property type="entry name" value="UDPGT"/>
    <property type="match status" value="1"/>
</dbReference>
<keyword id="KW-0903">Direct protein sequencing</keyword>
<keyword id="KW-0328">Glycosyltransferase</keyword>
<keyword id="KW-1185">Reference proteome</keyword>
<keyword id="KW-0808">Transferase</keyword>
<comment type="function">
    <text evidence="3">Glucosyltransferase involved in the last step of benzoxazinoid glucoside biosynthesis. Catalyzes the glucosylation of hydroxamic acids utilizing UDP-glucose as glucose doner, reducing the toxicity of these natural insecticides for storage. Can use DIMBOA and DIBOA as substrates, HMBOA (2-hydroxy-7-methoxy-2H-1,4-benzoxazin-3(4H)-one) and HBOA (2-hydroxy-2H-1,4-benzoxazin-3(4H)-one) with a lower efficiency, but not indole acetic acid or quercitin.</text>
</comment>
<comment type="catalytic activity">
    <reaction evidence="3 4">
        <text>DIMBOA + UDP-alpha-D-glucose = DIMBOA beta-D-glucoside + UDP + H(+)</text>
        <dbReference type="Rhea" id="RHEA:15541"/>
        <dbReference type="ChEBI" id="CHEBI:15378"/>
        <dbReference type="ChEBI" id="CHEBI:18048"/>
        <dbReference type="ChEBI" id="CHEBI:37573"/>
        <dbReference type="ChEBI" id="CHEBI:58223"/>
        <dbReference type="ChEBI" id="CHEBI:58885"/>
        <dbReference type="EC" id="2.4.1.202"/>
    </reaction>
</comment>
<comment type="catalytic activity">
    <reaction evidence="3 4">
        <text>DIBOA + UDP-alpha-D-glucose = DIBOA beta-D-glucoside + UDP + H(+)</text>
        <dbReference type="Rhea" id="RHEA:33955"/>
        <dbReference type="ChEBI" id="CHEBI:15378"/>
        <dbReference type="ChEBI" id="CHEBI:58223"/>
        <dbReference type="ChEBI" id="CHEBI:58885"/>
        <dbReference type="ChEBI" id="CHEBI:63558"/>
        <dbReference type="ChEBI" id="CHEBI:63670"/>
        <dbReference type="EC" id="2.4.1.202"/>
    </reaction>
</comment>
<comment type="cofactor">
    <cofactor evidence="4">
        <name>Mg(2+)</name>
        <dbReference type="ChEBI" id="CHEBI:18420"/>
    </cofactor>
    <cofactor evidence="4">
        <name>Ca(2+)</name>
        <dbReference type="ChEBI" id="CHEBI:29108"/>
    </cofactor>
</comment>
<comment type="biophysicochemical properties">
    <kinetics>
        <KM evidence="3 4">81 uM for 2,4-dihydroxy-7-methoxy-2H-1,4-benzoxazin-3(4H)-one (DIMBOA)</KM>
        <KM evidence="3 4">61 uM for 2,4-dihydroxy-2H-1,4-benzoxazin-3(4H)-one (DIBOA)</KM>
        <KM evidence="3 4">81 uM for uridine 5'-diphosphoglucose (UDPG) with DIMBOA as</KM>
        <text>kcat is 22.7 sec(-1) for DIMBOA. kcat is 12.5 sec(-1) for DIBOA. kcat is 22.6 sec(-1) for UDPG.</text>
    </kinetics>
    <phDependence>
        <text evidence="3 4">Optimum pH is 8.5.</text>
    </phDependence>
    <temperatureDependence>
        <text evidence="3 4">Optimum temperature is 45 degrees Celsius.</text>
    </temperatureDependence>
</comment>
<comment type="tissue specificity">
    <text evidence="3">Expressed at the same levels in roots and shoots.</text>
</comment>
<comment type="developmental stage">
    <text evidence="3">Highly expressed in young seedlings up to 4 days after imbibition.</text>
</comment>
<comment type="similarity">
    <text evidence="5">Belongs to the UDP-glycosyltransferase family.</text>
</comment>
<proteinExistence type="evidence at protein level"/>
<evidence type="ECO:0000250" key="1">
    <source>
        <dbReference type="UniProtKB" id="A0A0A1HA03"/>
    </source>
</evidence>
<evidence type="ECO:0000250" key="2">
    <source>
        <dbReference type="UniProtKB" id="P51094"/>
    </source>
</evidence>
<evidence type="ECO:0000269" key="3">
    <source>
    </source>
</evidence>
<evidence type="ECO:0000269" key="4">
    <source>
    </source>
</evidence>
<evidence type="ECO:0000305" key="5"/>
<organism>
    <name type="scientific">Zea mays</name>
    <name type="common">Maize</name>
    <dbReference type="NCBI Taxonomy" id="4577"/>
    <lineage>
        <taxon>Eukaryota</taxon>
        <taxon>Viridiplantae</taxon>
        <taxon>Streptophyta</taxon>
        <taxon>Embryophyta</taxon>
        <taxon>Tracheophyta</taxon>
        <taxon>Spermatophyta</taxon>
        <taxon>Magnoliopsida</taxon>
        <taxon>Liliopsida</taxon>
        <taxon>Poales</taxon>
        <taxon>Poaceae</taxon>
        <taxon>PACMAD clade</taxon>
        <taxon>Panicoideae</taxon>
        <taxon>Andropogonodae</taxon>
        <taxon>Andropogoneae</taxon>
        <taxon>Tripsacinae</taxon>
        <taxon>Zea</taxon>
    </lineage>
</organism>
<protein>
    <recommendedName>
        <fullName>DIMBOA UDP-glucosyltransferase BX8</fullName>
        <ecNumber evidence="3 4">2.4.1.202</ecNumber>
    </recommendedName>
    <alternativeName>
        <fullName>2,4-dihydroxy-7-methoxy-2H-1,4-benzoxazin-3(4H)-one 2-D-glucosyltransferase BX8</fullName>
    </alternativeName>
    <alternativeName>
        <fullName>Protein BENZOXAZINLESS 8</fullName>
    </alternativeName>
</protein>
<gene>
    <name type="primary">Bx8</name>
</gene>
<name>BX8_MAIZE</name>
<sequence length="459" mass="49470">MAASCGGRVVVFPFPFQGHFNPVMRLARALHARGVGITVFHTAGARAPDPADYPADYRFVPVPVEVAPELMASEDIAAIVTALNAACEAPFRDRLSALLSAADGEAGEAGGRVRCVLTDVSWDAVLSAARGLGVPALGVMTASAATFRVYMAYRTLVDKGYLPVREERKDDAVAELPPYRVKDLLRHETCDLEEFADLLGRVIAAARLSSGLIFHTFPFIEAGTLGEIRDDMSVPVYAVAPLNKLVPAATASLHGEVQADRGCLRWLDAQRARSVLYVSFGSMAAMDPHEFVELAWGLADAGRPFVWVVRPNLIRGFESGALPDGVEDRVRGRGVVVSWAPQEEVLAHPAVGGFFTHCGWNSTVEAVSEGVPMICHPRHGDQYGNARYVCHVWKVGTEVAGDQLERGEIKAAIDRLMGGSEEGEGIRKRMNELKIAADKGIDESAGSDLTNLVHLINSY</sequence>
<accession>Q8W2B7</accession>